<evidence type="ECO:0000255" key="1">
    <source>
        <dbReference type="HAMAP-Rule" id="MF_00455"/>
    </source>
</evidence>
<reference key="1">
    <citation type="journal article" date="2001" name="Proc. Natl. Acad. Sci. U.S.A.">
        <title>Genome sequence of an industrial microorganism Streptomyces avermitilis: deducing the ability of producing secondary metabolites.</title>
        <authorList>
            <person name="Omura S."/>
            <person name="Ikeda H."/>
            <person name="Ishikawa J."/>
            <person name="Hanamoto A."/>
            <person name="Takahashi C."/>
            <person name="Shinose M."/>
            <person name="Takahashi Y."/>
            <person name="Horikawa H."/>
            <person name="Nakazawa H."/>
            <person name="Osonoe T."/>
            <person name="Kikuchi H."/>
            <person name="Shiba T."/>
            <person name="Sakaki Y."/>
            <person name="Hattori M."/>
        </authorList>
    </citation>
    <scope>NUCLEOTIDE SEQUENCE [LARGE SCALE GENOMIC DNA]</scope>
    <source>
        <strain>ATCC 31267 / DSM 46492 / JCM 5070 / NBRC 14893 / NCIMB 12804 / NRRL 8165 / MA-4680</strain>
    </source>
</reference>
<reference key="2">
    <citation type="journal article" date="2003" name="Nat. Biotechnol.">
        <title>Complete genome sequence and comparative analysis of the industrial microorganism Streptomyces avermitilis.</title>
        <authorList>
            <person name="Ikeda H."/>
            <person name="Ishikawa J."/>
            <person name="Hanamoto A."/>
            <person name="Shinose M."/>
            <person name="Kikuchi H."/>
            <person name="Shiba T."/>
            <person name="Sakaki Y."/>
            <person name="Hattori M."/>
            <person name="Omura S."/>
        </authorList>
    </citation>
    <scope>NUCLEOTIDE SEQUENCE [LARGE SCALE GENOMIC DNA]</scope>
    <source>
        <strain>ATCC 31267 / DSM 46492 / JCM 5070 / NBRC 14893 / NCIMB 12804 / NRRL 8165 / MA-4680</strain>
    </source>
</reference>
<feature type="chain" id="PRO_0000195796" description="Xylose isomerase">
    <location>
        <begin position="1"/>
        <end position="388"/>
    </location>
</feature>
<feature type="active site" evidence="1">
    <location>
        <position position="54"/>
    </location>
</feature>
<feature type="active site" evidence="1">
    <location>
        <position position="57"/>
    </location>
</feature>
<feature type="binding site" evidence="1">
    <location>
        <position position="181"/>
    </location>
    <ligand>
        <name>Mg(2+)</name>
        <dbReference type="ChEBI" id="CHEBI:18420"/>
        <label>1</label>
    </ligand>
</feature>
<feature type="binding site" evidence="1">
    <location>
        <position position="217"/>
    </location>
    <ligand>
        <name>Mg(2+)</name>
        <dbReference type="ChEBI" id="CHEBI:18420"/>
        <label>1</label>
    </ligand>
</feature>
<feature type="binding site" evidence="1">
    <location>
        <position position="217"/>
    </location>
    <ligand>
        <name>Mg(2+)</name>
        <dbReference type="ChEBI" id="CHEBI:18420"/>
        <label>2</label>
    </ligand>
</feature>
<feature type="binding site" evidence="1">
    <location>
        <position position="220"/>
    </location>
    <ligand>
        <name>Mg(2+)</name>
        <dbReference type="ChEBI" id="CHEBI:18420"/>
        <label>2</label>
    </ligand>
</feature>
<feature type="binding site" evidence="1">
    <location>
        <position position="245"/>
    </location>
    <ligand>
        <name>Mg(2+)</name>
        <dbReference type="ChEBI" id="CHEBI:18420"/>
        <label>1</label>
    </ligand>
</feature>
<feature type="binding site" evidence="1">
    <location>
        <position position="255"/>
    </location>
    <ligand>
        <name>Mg(2+)</name>
        <dbReference type="ChEBI" id="CHEBI:18420"/>
        <label>2</label>
    </ligand>
</feature>
<feature type="binding site" evidence="1">
    <location>
        <position position="257"/>
    </location>
    <ligand>
        <name>Mg(2+)</name>
        <dbReference type="ChEBI" id="CHEBI:18420"/>
        <label>2</label>
    </ligand>
</feature>
<feature type="binding site" evidence="1">
    <location>
        <position position="287"/>
    </location>
    <ligand>
        <name>Mg(2+)</name>
        <dbReference type="ChEBI" id="CHEBI:18420"/>
        <label>1</label>
    </ligand>
</feature>
<name>XYLA_STRAW</name>
<dbReference type="EC" id="5.3.1.5" evidence="1"/>
<dbReference type="EMBL" id="AB070944">
    <property type="protein sequence ID" value="BAB69234.1"/>
    <property type="molecule type" value="Genomic_DNA"/>
</dbReference>
<dbReference type="EMBL" id="BA000030">
    <property type="protein sequence ID" value="BAC74893.1"/>
    <property type="molecule type" value="Genomic_DNA"/>
</dbReference>
<dbReference type="RefSeq" id="WP_010988577.1">
    <property type="nucleotide sequence ID" value="NZ_JZJK01000085.1"/>
</dbReference>
<dbReference type="PDB" id="8YUD">
    <property type="method" value="X-ray"/>
    <property type="resolution" value="2.81 A"/>
    <property type="chains" value="A/B/C/D/E/F=1-388"/>
</dbReference>
<dbReference type="PDBsum" id="8YUD"/>
<dbReference type="SMR" id="Q93HF3"/>
<dbReference type="GeneID" id="41544253"/>
<dbReference type="KEGG" id="sma:SAVERM_7182"/>
<dbReference type="eggNOG" id="COG2115">
    <property type="taxonomic scope" value="Bacteria"/>
</dbReference>
<dbReference type="HOGENOM" id="CLU_060750_0_0_11"/>
<dbReference type="OrthoDB" id="9763981at2"/>
<dbReference type="Proteomes" id="UP000000428">
    <property type="component" value="Chromosome"/>
</dbReference>
<dbReference type="GO" id="GO:0005737">
    <property type="term" value="C:cytoplasm"/>
    <property type="evidence" value="ECO:0007669"/>
    <property type="project" value="UniProtKB-SubCell"/>
</dbReference>
<dbReference type="GO" id="GO:0000287">
    <property type="term" value="F:magnesium ion binding"/>
    <property type="evidence" value="ECO:0007669"/>
    <property type="project" value="UniProtKB-UniRule"/>
</dbReference>
<dbReference type="GO" id="GO:0009045">
    <property type="term" value="F:xylose isomerase activity"/>
    <property type="evidence" value="ECO:0007669"/>
    <property type="project" value="UniProtKB-UniRule"/>
</dbReference>
<dbReference type="GO" id="GO:0042732">
    <property type="term" value="P:D-xylose metabolic process"/>
    <property type="evidence" value="ECO:0007669"/>
    <property type="project" value="UniProtKB-UniRule"/>
</dbReference>
<dbReference type="FunFam" id="3.20.20.150:FF:000009">
    <property type="entry name" value="Xylose isomerase"/>
    <property type="match status" value="1"/>
</dbReference>
<dbReference type="Gene3D" id="3.20.20.150">
    <property type="entry name" value="Divalent-metal-dependent TIM barrel enzymes"/>
    <property type="match status" value="1"/>
</dbReference>
<dbReference type="HAMAP" id="MF_00455">
    <property type="entry name" value="Xylose_isom_A"/>
    <property type="match status" value="1"/>
</dbReference>
<dbReference type="InterPro" id="IPR036237">
    <property type="entry name" value="Xyl_isomerase-like_sf"/>
</dbReference>
<dbReference type="InterPro" id="IPR013022">
    <property type="entry name" value="Xyl_isomerase-like_TIM-brl"/>
</dbReference>
<dbReference type="InterPro" id="IPR013453">
    <property type="entry name" value="XylA_actinobac"/>
</dbReference>
<dbReference type="InterPro" id="IPR001998">
    <property type="entry name" value="Xylose_isomerase"/>
</dbReference>
<dbReference type="NCBIfam" id="TIGR02631">
    <property type="entry name" value="xylA_Arthro"/>
    <property type="match status" value="1"/>
</dbReference>
<dbReference type="PANTHER" id="PTHR48408">
    <property type="match status" value="1"/>
</dbReference>
<dbReference type="PANTHER" id="PTHR48408:SF1">
    <property type="entry name" value="XYLOSE ISOMERASE"/>
    <property type="match status" value="1"/>
</dbReference>
<dbReference type="Pfam" id="PF01261">
    <property type="entry name" value="AP_endonuc_2"/>
    <property type="match status" value="1"/>
</dbReference>
<dbReference type="PRINTS" id="PR00688">
    <property type="entry name" value="XYLOSISMRASE"/>
</dbReference>
<dbReference type="SUPFAM" id="SSF51658">
    <property type="entry name" value="Xylose isomerase-like"/>
    <property type="match status" value="1"/>
</dbReference>
<dbReference type="PROSITE" id="PS51415">
    <property type="entry name" value="XYLOSE_ISOMERASE"/>
    <property type="match status" value="1"/>
</dbReference>
<gene>
    <name evidence="1" type="primary">xylA</name>
    <name type="ordered locus">SAV_7182</name>
</gene>
<comment type="catalytic activity">
    <reaction evidence="1">
        <text>alpha-D-xylose = alpha-D-xylulofuranose</text>
        <dbReference type="Rhea" id="RHEA:22816"/>
        <dbReference type="ChEBI" id="CHEBI:28518"/>
        <dbReference type="ChEBI" id="CHEBI:188998"/>
        <dbReference type="EC" id="5.3.1.5"/>
    </reaction>
</comment>
<comment type="cofactor">
    <cofactor evidence="1">
        <name>Mg(2+)</name>
        <dbReference type="ChEBI" id="CHEBI:18420"/>
    </cofactor>
    <text evidence="1">Binds 2 magnesium ions per subunit.</text>
</comment>
<comment type="subunit">
    <text evidence="1">Homotetramer.</text>
</comment>
<comment type="subcellular location">
    <subcellularLocation>
        <location evidence="1">Cytoplasm</location>
    </subcellularLocation>
</comment>
<comment type="similarity">
    <text evidence="1">Belongs to the xylose isomerase family.</text>
</comment>
<sequence>MNYQPTPEDRFTFGLWTVGWQGRDPFGDATRRALDPVETVQRLAGLGAHGVTFHDDDLIPFGSSDTERESHIKRFRQALDATGMAVPMATTNLFTHPVFKDGAFTANDRDVRRYALRKTIRNIDLAAELGAKTYVAWGGREGAESGAAKDVRVALDRMKEAFDLLGEYVTAQGYDLRFAIEPKPNEPRGDILLPTVGHALAFIERLERPELYGVNPEVGHEQMAGLNFPHGIAQALWAGKLFHIDLNGQSGIKYDQDLRFGAGDLRAAFWLVDLLESAGYEGPKHFDFKPPRTEDLDGVWASAAGCMRNYLILKERTAAFRADPEVQEALRAARLDELAQPTAGDGLTALLADRTAFEDFDVEAAAARGMAFEQLDQLAMDHLLGARG</sequence>
<accession>Q93HF3</accession>
<proteinExistence type="evidence at protein level"/>
<protein>
    <recommendedName>
        <fullName evidence="1">Xylose isomerase</fullName>
        <ecNumber evidence="1">5.3.1.5</ecNumber>
    </recommendedName>
</protein>
<organism>
    <name type="scientific">Streptomyces avermitilis (strain ATCC 31267 / DSM 46492 / JCM 5070 / NBRC 14893 / NCIMB 12804 / NRRL 8165 / MA-4680)</name>
    <dbReference type="NCBI Taxonomy" id="227882"/>
    <lineage>
        <taxon>Bacteria</taxon>
        <taxon>Bacillati</taxon>
        <taxon>Actinomycetota</taxon>
        <taxon>Actinomycetes</taxon>
        <taxon>Kitasatosporales</taxon>
        <taxon>Streptomycetaceae</taxon>
        <taxon>Streptomyces</taxon>
    </lineage>
</organism>
<keyword id="KW-0002">3D-structure</keyword>
<keyword id="KW-0119">Carbohydrate metabolism</keyword>
<keyword id="KW-0963">Cytoplasm</keyword>
<keyword id="KW-0413">Isomerase</keyword>
<keyword id="KW-0460">Magnesium</keyword>
<keyword id="KW-0479">Metal-binding</keyword>
<keyword id="KW-1185">Reference proteome</keyword>
<keyword id="KW-0859">Xylose metabolism</keyword>